<dbReference type="EC" id="2.6.1.1"/>
<dbReference type="EMBL" id="X93600">
    <property type="protein sequence ID" value="CAA63799.1"/>
    <property type="molecule type" value="Genomic_DNA"/>
</dbReference>
<dbReference type="SMR" id="Q59228"/>
<dbReference type="GO" id="GO:0005737">
    <property type="term" value="C:cytoplasm"/>
    <property type="evidence" value="ECO:0007669"/>
    <property type="project" value="UniProtKB-SubCell"/>
</dbReference>
<dbReference type="GO" id="GO:0004069">
    <property type="term" value="F:L-aspartate:2-oxoglutarate aminotransferase activity"/>
    <property type="evidence" value="ECO:0007669"/>
    <property type="project" value="UniProtKB-EC"/>
</dbReference>
<dbReference type="GO" id="GO:0030170">
    <property type="term" value="F:pyridoxal phosphate binding"/>
    <property type="evidence" value="ECO:0007669"/>
    <property type="project" value="InterPro"/>
</dbReference>
<dbReference type="GO" id="GO:0006520">
    <property type="term" value="P:amino acid metabolic process"/>
    <property type="evidence" value="ECO:0007669"/>
    <property type="project" value="InterPro"/>
</dbReference>
<dbReference type="GO" id="GO:0009058">
    <property type="term" value="P:biosynthetic process"/>
    <property type="evidence" value="ECO:0007669"/>
    <property type="project" value="InterPro"/>
</dbReference>
<dbReference type="CDD" id="cd00609">
    <property type="entry name" value="AAT_like"/>
    <property type="match status" value="1"/>
</dbReference>
<dbReference type="FunFam" id="3.40.640.10:FF:000033">
    <property type="entry name" value="Aspartate aminotransferase"/>
    <property type="match status" value="1"/>
</dbReference>
<dbReference type="Gene3D" id="3.90.1150.10">
    <property type="entry name" value="Aspartate Aminotransferase, domain 1"/>
    <property type="match status" value="1"/>
</dbReference>
<dbReference type="Gene3D" id="3.40.640.10">
    <property type="entry name" value="Type I PLP-dependent aspartate aminotransferase-like (Major domain)"/>
    <property type="match status" value="1"/>
</dbReference>
<dbReference type="InterPro" id="IPR004839">
    <property type="entry name" value="Aminotransferase_I/II_large"/>
</dbReference>
<dbReference type="InterPro" id="IPR050596">
    <property type="entry name" value="AspAT/PAT-like"/>
</dbReference>
<dbReference type="InterPro" id="IPR004838">
    <property type="entry name" value="NHTrfase_class1_PyrdxlP-BS"/>
</dbReference>
<dbReference type="InterPro" id="IPR015424">
    <property type="entry name" value="PyrdxlP-dep_Trfase"/>
</dbReference>
<dbReference type="InterPro" id="IPR015421">
    <property type="entry name" value="PyrdxlP-dep_Trfase_major"/>
</dbReference>
<dbReference type="InterPro" id="IPR015422">
    <property type="entry name" value="PyrdxlP-dep_Trfase_small"/>
</dbReference>
<dbReference type="PANTHER" id="PTHR46383">
    <property type="entry name" value="ASPARTATE AMINOTRANSFERASE"/>
    <property type="match status" value="1"/>
</dbReference>
<dbReference type="PANTHER" id="PTHR46383:SF1">
    <property type="entry name" value="ASPARTATE AMINOTRANSFERASE"/>
    <property type="match status" value="1"/>
</dbReference>
<dbReference type="Pfam" id="PF00155">
    <property type="entry name" value="Aminotran_1_2"/>
    <property type="match status" value="1"/>
</dbReference>
<dbReference type="PRINTS" id="PR00753">
    <property type="entry name" value="ACCSYNTHASE"/>
</dbReference>
<dbReference type="SUPFAM" id="SSF53383">
    <property type="entry name" value="PLP-dependent transferases"/>
    <property type="match status" value="1"/>
</dbReference>
<dbReference type="PROSITE" id="PS00105">
    <property type="entry name" value="AA_TRANSFER_CLASS_1"/>
    <property type="match status" value="1"/>
</dbReference>
<protein>
    <recommendedName>
        <fullName>Aspartate aminotransferase</fullName>
        <shortName>AspAT</shortName>
        <ecNumber>2.6.1.1</ecNumber>
    </recommendedName>
    <alternativeName>
        <fullName>Transaminase A</fullName>
    </alternativeName>
</protein>
<organism>
    <name type="scientific">Geobacillus stearothermophilus</name>
    <name type="common">Bacillus stearothermophilus</name>
    <dbReference type="NCBI Taxonomy" id="1422"/>
    <lineage>
        <taxon>Bacteria</taxon>
        <taxon>Bacillati</taxon>
        <taxon>Bacillota</taxon>
        <taxon>Bacilli</taxon>
        <taxon>Bacillales</taxon>
        <taxon>Anoxybacillaceae</taxon>
        <taxon>Geobacillus</taxon>
    </lineage>
</organism>
<comment type="catalytic activity">
    <reaction>
        <text>L-aspartate + 2-oxoglutarate = oxaloacetate + L-glutamate</text>
        <dbReference type="Rhea" id="RHEA:21824"/>
        <dbReference type="ChEBI" id="CHEBI:16452"/>
        <dbReference type="ChEBI" id="CHEBI:16810"/>
        <dbReference type="ChEBI" id="CHEBI:29985"/>
        <dbReference type="ChEBI" id="CHEBI:29991"/>
        <dbReference type="EC" id="2.6.1.1"/>
    </reaction>
</comment>
<comment type="cofactor">
    <cofactor>
        <name>pyridoxal 5'-phosphate</name>
        <dbReference type="ChEBI" id="CHEBI:597326"/>
    </cofactor>
</comment>
<comment type="subunit">
    <text evidence="1">Homodimer.</text>
</comment>
<comment type="subcellular location">
    <subcellularLocation>
        <location evidence="1">Cytoplasm</location>
    </subcellularLocation>
</comment>
<comment type="similarity">
    <text evidence="2">Belongs to the class-I pyridoxal-phosphate-dependent aminotransferase family.</text>
</comment>
<feature type="chain" id="PRO_0000123835" description="Aspartate aminotransferase">
    <location>
        <begin position="1"/>
        <end position="393"/>
    </location>
</feature>
<feature type="binding site" evidence="1">
    <location>
        <position position="38"/>
    </location>
    <ligand>
        <name>L-aspartate</name>
        <dbReference type="ChEBI" id="CHEBI:29991"/>
    </ligand>
</feature>
<feature type="binding site" evidence="1">
    <location>
        <position position="124"/>
    </location>
    <ligand>
        <name>L-aspartate</name>
        <dbReference type="ChEBI" id="CHEBI:29991"/>
    </ligand>
</feature>
<feature type="binding site" evidence="1">
    <location>
        <position position="174"/>
    </location>
    <ligand>
        <name>L-aspartate</name>
        <dbReference type="ChEBI" id="CHEBI:29991"/>
    </ligand>
</feature>
<feature type="modified residue" description="N6-(pyridoxal phosphate)lysine" evidence="1">
    <location>
        <position position="237"/>
    </location>
</feature>
<reference key="1">
    <citation type="journal article" date="1996" name="Appl. Environ. Microbiol.">
        <title>Stereospecific production of the herbicide phosphinothricin (glufosinate): purification of aspartate transaminase from Bacillus stearothermophilus, cloning of the corresponding gene, aspC, and application in a coupled transaminase process.</title>
        <authorList>
            <person name="Bartsch K."/>
            <person name="Schneider R."/>
            <person name="Schulz A."/>
        </authorList>
    </citation>
    <scope>NUCLEOTIDE SEQUENCE [GENOMIC DNA]</scope>
    <source>
        <strain>ATCC 12980 / DSM 22 / CCM 2062 / JCM 2501 / NBRC 12550 / NCIMB 8923 / NCTC 10339 / R-35646 / VKM B-510</strain>
    </source>
</reference>
<evidence type="ECO:0000250" key="1"/>
<evidence type="ECO:0000305" key="2"/>
<accession>Q59228</accession>
<gene>
    <name type="primary">aspC</name>
</gene>
<proteinExistence type="inferred from homology"/>
<name>AAT_GEOSE</name>
<sequence>MKLAKRVASLTPSATLAITEKAKELKAAGHDVIGLGAGEPDFNTPQHILDAAIKAMNEGHTKYTPSGGLPALKEEIIKKFARDQGLDYEPAEVIVCVGAKHALYTLFQVLLDEGDEVIIPTPYWVSYPEQVKLAGGVPVYVEGLEQNHFKITPEQLKQAITPRTKAVIINSPSNPTGMIYTAEELKALGEVCLAHGVLIVSDEIYEKLTYGGAKHVSIAELSPELKAQTVIINGVSKSHSMTGWRIGYAAGPKDIIKAMTDLASHSTSNPTSIAQYAAIAAYSGPQEPVEQMRQAFEQRLNIIYDKLVQIPGFTCVKPQGAFYLFPNAREAAAMAGCRTVDEFVAALLEEAKVALVPGSGFGAPDNVRLSYATSLDALETAVERIHRFMEARA</sequence>
<keyword id="KW-0032">Aminotransferase</keyword>
<keyword id="KW-0963">Cytoplasm</keyword>
<keyword id="KW-0663">Pyridoxal phosphate</keyword>
<keyword id="KW-0808">Transferase</keyword>